<feature type="chain" id="PRO_0000281379" description="Epoxide hydrolase 4">
    <location>
        <begin position="1"/>
        <end position="359"/>
    </location>
</feature>
<feature type="transmembrane region" description="Helical; Signal-anchor for type II membrane protein" evidence="2">
    <location>
        <begin position="15"/>
        <end position="35"/>
    </location>
</feature>
<feature type="domain" description="AB hydrolase-1" evidence="2">
    <location>
        <begin position="92"/>
        <end position="337"/>
    </location>
</feature>
<feature type="active site" description="Nucleophile" evidence="1">
    <location>
        <position position="167"/>
    </location>
</feature>
<feature type="active site" description="Proton donor" evidence="1">
    <location>
        <position position="279"/>
    </location>
</feature>
<feature type="active site" description="Proton acceptor" evidence="1">
    <location>
        <position position="334"/>
    </location>
</feature>
<evidence type="ECO:0000250" key="1"/>
<evidence type="ECO:0000255" key="2"/>
<evidence type="ECO:0000305" key="3"/>
<proteinExistence type="evidence at transcript level"/>
<gene>
    <name type="primary">Ephx4</name>
    <name type="synonym">Abhd7</name>
    <name type="synonym">Ephxrp</name>
</gene>
<keyword id="KW-0378">Hydrolase</keyword>
<keyword id="KW-0472">Membrane</keyword>
<keyword id="KW-1185">Reference proteome</keyword>
<keyword id="KW-0735">Signal-anchor</keyword>
<keyword id="KW-0812">Transmembrane</keyword>
<keyword id="KW-1133">Transmembrane helix</keyword>
<dbReference type="EC" id="3.3.-.-"/>
<dbReference type="EMBL" id="AC126598">
    <property type="status" value="NOT_ANNOTATED_CDS"/>
    <property type="molecule type" value="Genomic_DNA"/>
</dbReference>
<dbReference type="EMBL" id="BN000367">
    <property type="protein sequence ID" value="CAE51855.1"/>
    <property type="molecule type" value="mRNA"/>
</dbReference>
<dbReference type="CCDS" id="CCDS19501.1"/>
<dbReference type="RefSeq" id="NP_001001804.2">
    <property type="nucleotide sequence ID" value="NM_001001804.2"/>
</dbReference>
<dbReference type="SMR" id="Q6IE26"/>
<dbReference type="FunCoup" id="Q6IE26">
    <property type="interactions" value="6"/>
</dbReference>
<dbReference type="STRING" id="10090.ENSMUSP00000043764"/>
<dbReference type="ChEMBL" id="CHEMBL4295863"/>
<dbReference type="ESTHER" id="mouse-ephx4">
    <property type="family name" value="Epoxide_hydrolase"/>
</dbReference>
<dbReference type="PhosphoSitePlus" id="Q6IE26"/>
<dbReference type="PaxDb" id="10090-ENSMUSP00000043764"/>
<dbReference type="ProteomicsDB" id="275762"/>
<dbReference type="Antibodypedia" id="33635">
    <property type="antibodies" value="93 antibodies from 17 providers"/>
</dbReference>
<dbReference type="DNASU" id="384214"/>
<dbReference type="Ensembl" id="ENSMUST00000049146.12">
    <property type="protein sequence ID" value="ENSMUSP00000043764.6"/>
    <property type="gene ID" value="ENSMUSG00000033805.13"/>
</dbReference>
<dbReference type="GeneID" id="384214"/>
<dbReference type="KEGG" id="mmu:384214"/>
<dbReference type="UCSC" id="uc008yme.1">
    <property type="organism name" value="mouse"/>
</dbReference>
<dbReference type="AGR" id="MGI:2686228"/>
<dbReference type="CTD" id="253152"/>
<dbReference type="MGI" id="MGI:2686228">
    <property type="gene designation" value="Ephx4"/>
</dbReference>
<dbReference type="VEuPathDB" id="HostDB:ENSMUSG00000033805"/>
<dbReference type="eggNOG" id="KOG4178">
    <property type="taxonomic scope" value="Eukaryota"/>
</dbReference>
<dbReference type="GeneTree" id="ENSGT00940000156233"/>
<dbReference type="HOGENOM" id="CLU_020336_7_3_1"/>
<dbReference type="InParanoid" id="Q6IE26"/>
<dbReference type="OMA" id="YRWMVRS"/>
<dbReference type="OrthoDB" id="408373at2759"/>
<dbReference type="PhylomeDB" id="Q6IE26"/>
<dbReference type="TreeFam" id="TF314403"/>
<dbReference type="BioGRID-ORCS" id="384214">
    <property type="hits" value="0 hits in 79 CRISPR screens"/>
</dbReference>
<dbReference type="PRO" id="PR:Q6IE26"/>
<dbReference type="Proteomes" id="UP000000589">
    <property type="component" value="Chromosome 5"/>
</dbReference>
<dbReference type="RNAct" id="Q6IE26">
    <property type="molecule type" value="protein"/>
</dbReference>
<dbReference type="Bgee" id="ENSMUSG00000033805">
    <property type="expression patterns" value="Expressed in olfactory epithelium and 134 other cell types or tissues"/>
</dbReference>
<dbReference type="ExpressionAtlas" id="Q6IE26">
    <property type="expression patterns" value="baseline and differential"/>
</dbReference>
<dbReference type="GO" id="GO:0016020">
    <property type="term" value="C:membrane"/>
    <property type="evidence" value="ECO:0007669"/>
    <property type="project" value="UniProtKB-SubCell"/>
</dbReference>
<dbReference type="GO" id="GO:0004301">
    <property type="term" value="F:epoxide hydrolase activity"/>
    <property type="evidence" value="ECO:0007669"/>
    <property type="project" value="UniProtKB-ARBA"/>
</dbReference>
<dbReference type="Gene3D" id="3.40.50.1820">
    <property type="entry name" value="alpha/beta hydrolase"/>
    <property type="match status" value="1"/>
</dbReference>
<dbReference type="InterPro" id="IPR000073">
    <property type="entry name" value="AB_hydrolase_1"/>
</dbReference>
<dbReference type="InterPro" id="IPR029058">
    <property type="entry name" value="AB_hydrolase_fold"/>
</dbReference>
<dbReference type="InterPro" id="IPR000639">
    <property type="entry name" value="Epox_hydrolase-like"/>
</dbReference>
<dbReference type="PANTHER" id="PTHR43329">
    <property type="entry name" value="EPOXIDE HYDROLASE"/>
    <property type="match status" value="1"/>
</dbReference>
<dbReference type="Pfam" id="PF00561">
    <property type="entry name" value="Abhydrolase_1"/>
    <property type="match status" value="1"/>
</dbReference>
<dbReference type="PRINTS" id="PR00111">
    <property type="entry name" value="ABHYDROLASE"/>
</dbReference>
<dbReference type="PRINTS" id="PR00412">
    <property type="entry name" value="EPOXHYDRLASE"/>
</dbReference>
<dbReference type="SUPFAM" id="SSF53474">
    <property type="entry name" value="alpha/beta-Hydrolases"/>
    <property type="match status" value="1"/>
</dbReference>
<accession>Q6IE26</accession>
<accession>F8VQ47</accession>
<organism>
    <name type="scientific">Mus musculus</name>
    <name type="common">Mouse</name>
    <dbReference type="NCBI Taxonomy" id="10090"/>
    <lineage>
        <taxon>Eukaryota</taxon>
        <taxon>Metazoa</taxon>
        <taxon>Chordata</taxon>
        <taxon>Craniata</taxon>
        <taxon>Vertebrata</taxon>
        <taxon>Euteleostomi</taxon>
        <taxon>Mammalia</taxon>
        <taxon>Eutheria</taxon>
        <taxon>Euarchontoglires</taxon>
        <taxon>Glires</taxon>
        <taxon>Rodentia</taxon>
        <taxon>Myomorpha</taxon>
        <taxon>Muroidea</taxon>
        <taxon>Muridae</taxon>
        <taxon>Murinae</taxon>
        <taxon>Mus</taxon>
        <taxon>Mus</taxon>
    </lineage>
</organism>
<sequence length="359" mass="41477">MAPPRPPRLLPALRALLYWSLVYGYCGLCASVHLLKLLWSIGRAPAQTFRRAARANPPACLNDPSLGTHCYVRIKDSGLRFHYVAAGERGKPLMLLLHGFPEFWYSWRHQLREFKSEYRVVALDLRGYGESDAPAHQESYKLDCLIADIKDILDSLGYSKCVLIGHDWGGMIAWLIAVCYPEMIMKLIVINFPHPSVFTEYILRHPAQLFRSSFYYFFQIPRFPEFMFSINDFKALKHLFTSQSTGIGRKGRQLTTEDLEAYVYVFSQPGALSGPINHYRNIFSCLPLKHHMVTTPTLLLWGEEDAFMEVEMAEVTKIYVKNYFRLTILSEGSHWLQQDQPDIVNGLIWAFLKEETRRD</sequence>
<reference key="1">
    <citation type="journal article" date="2009" name="PLoS Biol.">
        <title>Lineage-specific biology revealed by a finished genome assembly of the mouse.</title>
        <authorList>
            <person name="Church D.M."/>
            <person name="Goodstadt L."/>
            <person name="Hillier L.W."/>
            <person name="Zody M.C."/>
            <person name="Goldstein S."/>
            <person name="She X."/>
            <person name="Bult C.J."/>
            <person name="Agarwala R."/>
            <person name="Cherry J.L."/>
            <person name="DiCuccio M."/>
            <person name="Hlavina W."/>
            <person name="Kapustin Y."/>
            <person name="Meric P."/>
            <person name="Maglott D."/>
            <person name="Birtle Z."/>
            <person name="Marques A.C."/>
            <person name="Graves T."/>
            <person name="Zhou S."/>
            <person name="Teague B."/>
            <person name="Potamousis K."/>
            <person name="Churas C."/>
            <person name="Place M."/>
            <person name="Herschleb J."/>
            <person name="Runnheim R."/>
            <person name="Forrest D."/>
            <person name="Amos-Landgraf J."/>
            <person name="Schwartz D.C."/>
            <person name="Cheng Z."/>
            <person name="Lindblad-Toh K."/>
            <person name="Eichler E.E."/>
            <person name="Ponting C.P."/>
        </authorList>
    </citation>
    <scope>NUCLEOTIDE SEQUENCE [LARGE SCALE GENOMIC DNA]</scope>
    <source>
        <strain>C57BL/6J</strain>
    </source>
</reference>
<reference key="2">
    <citation type="journal article" date="2004" name="Genome Res.">
        <title>A genomic analysis of rat proteases and protease inhibitors.</title>
        <authorList>
            <person name="Puente X.S."/>
            <person name="Lopez-Otin C."/>
        </authorList>
    </citation>
    <scope>IDENTIFICATION</scope>
    <source>
        <strain>C57BL/6J</strain>
    </source>
</reference>
<name>EPHX4_MOUSE</name>
<protein>
    <recommendedName>
        <fullName>Epoxide hydrolase 4</fullName>
        <ecNumber>3.3.-.-</ecNumber>
    </recommendedName>
    <alternativeName>
        <fullName>Abhydrolase domain-containing protein 7</fullName>
    </alternativeName>
    <alternativeName>
        <fullName>Epoxide hydrolase-related protein</fullName>
    </alternativeName>
</protein>
<comment type="subcellular location">
    <subcellularLocation>
        <location evidence="3">Membrane</location>
        <topology evidence="3">Single-pass type II membrane protein</topology>
    </subcellularLocation>
</comment>
<comment type="similarity">
    <text evidence="3">Belongs to the AB hydrolase superfamily. Epoxide hydrolase family.</text>
</comment>